<proteinExistence type="inferred from homology"/>
<evidence type="ECO:0000255" key="1">
    <source>
        <dbReference type="HAMAP-Rule" id="MF_00385"/>
    </source>
</evidence>
<evidence type="ECO:0000305" key="2"/>
<keyword id="KW-0687">Ribonucleoprotein</keyword>
<keyword id="KW-0689">Ribosomal protein</keyword>
<protein>
    <recommendedName>
        <fullName evidence="1">Small ribosomal subunit protein bS16</fullName>
    </recommendedName>
    <alternativeName>
        <fullName evidence="2">30S ribosomal protein S16</fullName>
    </alternativeName>
</protein>
<name>RS16_SALPB</name>
<feature type="chain" id="PRO_1000080167" description="Small ribosomal subunit protein bS16">
    <location>
        <begin position="1"/>
        <end position="82"/>
    </location>
</feature>
<gene>
    <name evidence="1" type="primary">rpsP</name>
    <name type="ordered locus">SPAB_03389</name>
</gene>
<sequence length="82" mass="9235">MVTIRLARHGAKKRPFYQVVVTDSRNARNGRFIERVGFFNPIASEKEEGTRLDLDRIAHWVGQGATISDRVAALIKEVKKAA</sequence>
<dbReference type="EMBL" id="CP000886">
    <property type="protein sequence ID" value="ABX68740.1"/>
    <property type="molecule type" value="Genomic_DNA"/>
</dbReference>
<dbReference type="RefSeq" id="WP_000256453.1">
    <property type="nucleotide sequence ID" value="NC_010102.1"/>
</dbReference>
<dbReference type="SMR" id="A9MZ51"/>
<dbReference type="KEGG" id="spq:SPAB_03389"/>
<dbReference type="PATRIC" id="fig|1016998.12.peg.3193"/>
<dbReference type="HOGENOM" id="CLU_100590_5_1_6"/>
<dbReference type="BioCyc" id="SENT1016998:SPAB_RS13845-MONOMER"/>
<dbReference type="Proteomes" id="UP000008556">
    <property type="component" value="Chromosome"/>
</dbReference>
<dbReference type="GO" id="GO:0005737">
    <property type="term" value="C:cytoplasm"/>
    <property type="evidence" value="ECO:0007669"/>
    <property type="project" value="UniProtKB-ARBA"/>
</dbReference>
<dbReference type="GO" id="GO:0015935">
    <property type="term" value="C:small ribosomal subunit"/>
    <property type="evidence" value="ECO:0007669"/>
    <property type="project" value="TreeGrafter"/>
</dbReference>
<dbReference type="GO" id="GO:0003735">
    <property type="term" value="F:structural constituent of ribosome"/>
    <property type="evidence" value="ECO:0007669"/>
    <property type="project" value="InterPro"/>
</dbReference>
<dbReference type="GO" id="GO:0006412">
    <property type="term" value="P:translation"/>
    <property type="evidence" value="ECO:0007669"/>
    <property type="project" value="UniProtKB-UniRule"/>
</dbReference>
<dbReference type="FunFam" id="3.30.1320.10:FF:000001">
    <property type="entry name" value="30S ribosomal protein S16"/>
    <property type="match status" value="1"/>
</dbReference>
<dbReference type="Gene3D" id="3.30.1320.10">
    <property type="match status" value="1"/>
</dbReference>
<dbReference type="HAMAP" id="MF_00385">
    <property type="entry name" value="Ribosomal_bS16"/>
    <property type="match status" value="1"/>
</dbReference>
<dbReference type="InterPro" id="IPR000307">
    <property type="entry name" value="Ribosomal_bS16"/>
</dbReference>
<dbReference type="InterPro" id="IPR020592">
    <property type="entry name" value="Ribosomal_bS16_CS"/>
</dbReference>
<dbReference type="InterPro" id="IPR023803">
    <property type="entry name" value="Ribosomal_bS16_dom_sf"/>
</dbReference>
<dbReference type="NCBIfam" id="TIGR00002">
    <property type="entry name" value="S16"/>
    <property type="match status" value="1"/>
</dbReference>
<dbReference type="PANTHER" id="PTHR12919">
    <property type="entry name" value="30S RIBOSOMAL PROTEIN S16"/>
    <property type="match status" value="1"/>
</dbReference>
<dbReference type="PANTHER" id="PTHR12919:SF20">
    <property type="entry name" value="SMALL RIBOSOMAL SUBUNIT PROTEIN BS16M"/>
    <property type="match status" value="1"/>
</dbReference>
<dbReference type="Pfam" id="PF00886">
    <property type="entry name" value="Ribosomal_S16"/>
    <property type="match status" value="1"/>
</dbReference>
<dbReference type="SUPFAM" id="SSF54565">
    <property type="entry name" value="Ribosomal protein S16"/>
    <property type="match status" value="1"/>
</dbReference>
<dbReference type="PROSITE" id="PS00732">
    <property type="entry name" value="RIBOSOMAL_S16"/>
    <property type="match status" value="1"/>
</dbReference>
<reference key="1">
    <citation type="submission" date="2007-11" db="EMBL/GenBank/DDBJ databases">
        <authorList>
            <consortium name="The Salmonella enterica serovar Paratyphi B Genome Sequencing Project"/>
            <person name="McClelland M."/>
            <person name="Sanderson E.K."/>
            <person name="Porwollik S."/>
            <person name="Spieth J."/>
            <person name="Clifton W.S."/>
            <person name="Fulton R."/>
            <person name="Cordes M."/>
            <person name="Wollam A."/>
            <person name="Shah N."/>
            <person name="Pepin K."/>
            <person name="Bhonagiri V."/>
            <person name="Nash W."/>
            <person name="Johnson M."/>
            <person name="Thiruvilangam P."/>
            <person name="Wilson R."/>
        </authorList>
    </citation>
    <scope>NUCLEOTIDE SEQUENCE [LARGE SCALE GENOMIC DNA]</scope>
    <source>
        <strain>ATCC BAA-1250 / SPB7</strain>
    </source>
</reference>
<accession>A9MZ51</accession>
<comment type="similarity">
    <text evidence="1">Belongs to the bacterial ribosomal protein bS16 family.</text>
</comment>
<organism>
    <name type="scientific">Salmonella paratyphi B (strain ATCC BAA-1250 / SPB7)</name>
    <dbReference type="NCBI Taxonomy" id="1016998"/>
    <lineage>
        <taxon>Bacteria</taxon>
        <taxon>Pseudomonadati</taxon>
        <taxon>Pseudomonadota</taxon>
        <taxon>Gammaproteobacteria</taxon>
        <taxon>Enterobacterales</taxon>
        <taxon>Enterobacteriaceae</taxon>
        <taxon>Salmonella</taxon>
    </lineage>
</organism>